<feature type="chain" id="PRO_1000198945" description="Aspartate--tRNA(Asp/Asn) ligase">
    <location>
        <begin position="1"/>
        <end position="610"/>
    </location>
</feature>
<feature type="region of interest" description="Aspartate" evidence="1">
    <location>
        <begin position="206"/>
        <end position="209"/>
    </location>
</feature>
<feature type="binding site" evidence="1">
    <location>
        <position position="182"/>
    </location>
    <ligand>
        <name>L-aspartate</name>
        <dbReference type="ChEBI" id="CHEBI:29991"/>
    </ligand>
</feature>
<feature type="binding site" evidence="1">
    <location>
        <begin position="228"/>
        <end position="230"/>
    </location>
    <ligand>
        <name>ATP</name>
        <dbReference type="ChEBI" id="CHEBI:30616"/>
    </ligand>
</feature>
<feature type="binding site" evidence="1">
    <location>
        <position position="228"/>
    </location>
    <ligand>
        <name>L-aspartate</name>
        <dbReference type="ChEBI" id="CHEBI:29991"/>
    </ligand>
</feature>
<feature type="binding site" evidence="1">
    <location>
        <position position="237"/>
    </location>
    <ligand>
        <name>ATP</name>
        <dbReference type="ChEBI" id="CHEBI:30616"/>
    </ligand>
</feature>
<feature type="binding site" evidence="1">
    <location>
        <position position="470"/>
    </location>
    <ligand>
        <name>L-aspartate</name>
        <dbReference type="ChEBI" id="CHEBI:29991"/>
    </ligand>
</feature>
<feature type="binding site" evidence="1">
    <location>
        <position position="506"/>
    </location>
    <ligand>
        <name>ATP</name>
        <dbReference type="ChEBI" id="CHEBI:30616"/>
    </ligand>
</feature>
<feature type="binding site" evidence="1">
    <location>
        <position position="513"/>
    </location>
    <ligand>
        <name>L-aspartate</name>
        <dbReference type="ChEBI" id="CHEBI:29991"/>
    </ligand>
</feature>
<feature type="binding site" evidence="1">
    <location>
        <begin position="558"/>
        <end position="561"/>
    </location>
    <ligand>
        <name>ATP</name>
        <dbReference type="ChEBI" id="CHEBI:30616"/>
    </ligand>
</feature>
<feature type="site" description="Important for tRNA non-discrimination" evidence="1">
    <location>
        <position position="38"/>
    </location>
</feature>
<evidence type="ECO:0000255" key="1">
    <source>
        <dbReference type="HAMAP-Rule" id="MF_00044"/>
    </source>
</evidence>
<organism>
    <name type="scientific">Acidobacterium capsulatum (strain ATCC 51196 / DSM 11244 / BCRC 80197 / JCM 7670 / NBRC 15755 / NCIMB 13165 / 161)</name>
    <dbReference type="NCBI Taxonomy" id="240015"/>
    <lineage>
        <taxon>Bacteria</taxon>
        <taxon>Pseudomonadati</taxon>
        <taxon>Acidobacteriota</taxon>
        <taxon>Terriglobia</taxon>
        <taxon>Terriglobales</taxon>
        <taxon>Acidobacteriaceae</taxon>
        <taxon>Acidobacterium</taxon>
    </lineage>
</organism>
<protein>
    <recommendedName>
        <fullName evidence="1">Aspartate--tRNA(Asp/Asn) ligase</fullName>
        <ecNumber evidence="1">6.1.1.23</ecNumber>
    </recommendedName>
    <alternativeName>
        <fullName evidence="1">Aspartyl-tRNA synthetase</fullName>
        <shortName evidence="1">AspRS</shortName>
    </alternativeName>
    <alternativeName>
        <fullName evidence="1">Non-discriminating aspartyl-tRNA synthetase</fullName>
        <shortName evidence="1">ND-AspRS</shortName>
    </alternativeName>
</protein>
<proteinExistence type="inferred from homology"/>
<comment type="function">
    <text evidence="1">Aspartyl-tRNA synthetase with relaxed tRNA specificity since it is able to aspartylate not only its cognate tRNA(Asp) but also tRNA(Asn). Reaction proceeds in two steps: L-aspartate is first activated by ATP to form Asp-AMP and then transferred to the acceptor end of tRNA(Asp/Asn).</text>
</comment>
<comment type="catalytic activity">
    <reaction evidence="1">
        <text>tRNA(Asx) + L-aspartate + ATP = L-aspartyl-tRNA(Asx) + AMP + diphosphate</text>
        <dbReference type="Rhea" id="RHEA:18349"/>
        <dbReference type="Rhea" id="RHEA-COMP:9710"/>
        <dbReference type="Rhea" id="RHEA-COMP:9711"/>
        <dbReference type="ChEBI" id="CHEBI:29991"/>
        <dbReference type="ChEBI" id="CHEBI:30616"/>
        <dbReference type="ChEBI" id="CHEBI:33019"/>
        <dbReference type="ChEBI" id="CHEBI:78442"/>
        <dbReference type="ChEBI" id="CHEBI:78516"/>
        <dbReference type="ChEBI" id="CHEBI:456215"/>
        <dbReference type="EC" id="6.1.1.23"/>
    </reaction>
</comment>
<comment type="subunit">
    <text evidence="1">Homodimer.</text>
</comment>
<comment type="subcellular location">
    <subcellularLocation>
        <location evidence="1">Cytoplasm</location>
    </subcellularLocation>
</comment>
<comment type="similarity">
    <text evidence="1">Belongs to the class-II aminoacyl-tRNA synthetase family. Type 1 subfamily.</text>
</comment>
<sequence length="610" mass="68805">MLDFLGTKQRTHTCGELRAAHAGETITIMGWVNRRRDHGNLIFLDLRDRYGITQVVLDKDLSAEAHAKAEQARPEYVICATGKVRARSQEAINPKMPTGEIEIAATELLILNDSKVPPFSPAEEAIANEEVRLKYRYLDLRRPEMQHNFEVRHKVALAVRQYLSGQGFFEVETPFMTRSTPEGARDYLVPSRVHPGEFYALPQSPQLFKQILMISGMDRYFQIARCFRDEDLRADRQPEFTQIDLEMTFPQQETIFGVVEGFLAAAFEAVGQQITVPFPRMTYDKAIELYGIDKPDLRLPPMTDVRSVFSDEELQSLKIEPGMPIVAIVIPNKSAMSNTQKKAFGKEVEEQVGAELAYLDVERLRTSPQFALLADRIDAAAAAHCKLERVEPDHRLVVISPRLGAAAVSRDTSWVYKRAGQLRLELGKRFAAEHKAFEKKGTAADYQFLWVTDFPFFEWDEQSHTWTFAHHPFTSPHQDDLIAGRLESDQAAVRALAYDVVLNGTELGSGSIRIHRQDVQQQIFRALGMSDDEAKERFGFFLEALQYGTPPHGGIALGLDRIVMILAGASSLREVIAFPKTAKAIDLMVDAPTPVSDAQLRELHIRPTKQ</sequence>
<keyword id="KW-0030">Aminoacyl-tRNA synthetase</keyword>
<keyword id="KW-0067">ATP-binding</keyword>
<keyword id="KW-0963">Cytoplasm</keyword>
<keyword id="KW-0436">Ligase</keyword>
<keyword id="KW-0547">Nucleotide-binding</keyword>
<keyword id="KW-0648">Protein biosynthesis</keyword>
<keyword id="KW-1185">Reference proteome</keyword>
<accession>C1FAE8</accession>
<reference key="1">
    <citation type="journal article" date="2009" name="Appl. Environ. Microbiol.">
        <title>Three genomes from the phylum Acidobacteria provide insight into the lifestyles of these microorganisms in soils.</title>
        <authorList>
            <person name="Ward N.L."/>
            <person name="Challacombe J.F."/>
            <person name="Janssen P.H."/>
            <person name="Henrissat B."/>
            <person name="Coutinho P.M."/>
            <person name="Wu M."/>
            <person name="Xie G."/>
            <person name="Haft D.H."/>
            <person name="Sait M."/>
            <person name="Badger J."/>
            <person name="Barabote R.D."/>
            <person name="Bradley B."/>
            <person name="Brettin T.S."/>
            <person name="Brinkac L.M."/>
            <person name="Bruce D."/>
            <person name="Creasy T."/>
            <person name="Daugherty S.C."/>
            <person name="Davidsen T.M."/>
            <person name="DeBoy R.T."/>
            <person name="Detter J.C."/>
            <person name="Dodson R.J."/>
            <person name="Durkin A.S."/>
            <person name="Ganapathy A."/>
            <person name="Gwinn-Giglio M."/>
            <person name="Han C.S."/>
            <person name="Khouri H."/>
            <person name="Kiss H."/>
            <person name="Kothari S.P."/>
            <person name="Madupu R."/>
            <person name="Nelson K.E."/>
            <person name="Nelson W.C."/>
            <person name="Paulsen I."/>
            <person name="Penn K."/>
            <person name="Ren Q."/>
            <person name="Rosovitz M.J."/>
            <person name="Selengut J.D."/>
            <person name="Shrivastava S."/>
            <person name="Sullivan S.A."/>
            <person name="Tapia R."/>
            <person name="Thompson L.S."/>
            <person name="Watkins K.L."/>
            <person name="Yang Q."/>
            <person name="Yu C."/>
            <person name="Zafar N."/>
            <person name="Zhou L."/>
            <person name="Kuske C.R."/>
        </authorList>
    </citation>
    <scope>NUCLEOTIDE SEQUENCE [LARGE SCALE GENOMIC DNA]</scope>
    <source>
        <strain>ATCC 51196 / DSM 11244 / BCRC 80197 / JCM 7670 / NBRC 15755 / NCIMB 13165 / 161</strain>
    </source>
</reference>
<name>SYDND_ACIC5</name>
<dbReference type="EC" id="6.1.1.23" evidence="1"/>
<dbReference type="EMBL" id="CP001472">
    <property type="protein sequence ID" value="ACO33733.1"/>
    <property type="molecule type" value="Genomic_DNA"/>
</dbReference>
<dbReference type="RefSeq" id="WP_015897436.1">
    <property type="nucleotide sequence ID" value="NC_012483.1"/>
</dbReference>
<dbReference type="SMR" id="C1FAE8"/>
<dbReference type="FunCoup" id="C1FAE8">
    <property type="interactions" value="552"/>
</dbReference>
<dbReference type="STRING" id="240015.ACP_2346"/>
<dbReference type="KEGG" id="aca:ACP_2346"/>
<dbReference type="eggNOG" id="COG0173">
    <property type="taxonomic scope" value="Bacteria"/>
</dbReference>
<dbReference type="HOGENOM" id="CLU_014330_3_2_0"/>
<dbReference type="InParanoid" id="C1FAE8"/>
<dbReference type="OrthoDB" id="9802326at2"/>
<dbReference type="Proteomes" id="UP000002207">
    <property type="component" value="Chromosome"/>
</dbReference>
<dbReference type="GO" id="GO:0005737">
    <property type="term" value="C:cytoplasm"/>
    <property type="evidence" value="ECO:0007669"/>
    <property type="project" value="UniProtKB-SubCell"/>
</dbReference>
<dbReference type="GO" id="GO:0004815">
    <property type="term" value="F:aspartate-tRNA ligase activity"/>
    <property type="evidence" value="ECO:0007669"/>
    <property type="project" value="UniProtKB-UniRule"/>
</dbReference>
<dbReference type="GO" id="GO:0050560">
    <property type="term" value="F:aspartate-tRNA(Asn) ligase activity"/>
    <property type="evidence" value="ECO:0007669"/>
    <property type="project" value="UniProtKB-EC"/>
</dbReference>
<dbReference type="GO" id="GO:0005524">
    <property type="term" value="F:ATP binding"/>
    <property type="evidence" value="ECO:0007669"/>
    <property type="project" value="UniProtKB-UniRule"/>
</dbReference>
<dbReference type="GO" id="GO:0003676">
    <property type="term" value="F:nucleic acid binding"/>
    <property type="evidence" value="ECO:0007669"/>
    <property type="project" value="InterPro"/>
</dbReference>
<dbReference type="GO" id="GO:0006422">
    <property type="term" value="P:aspartyl-tRNA aminoacylation"/>
    <property type="evidence" value="ECO:0007669"/>
    <property type="project" value="UniProtKB-UniRule"/>
</dbReference>
<dbReference type="CDD" id="cd00777">
    <property type="entry name" value="AspRS_core"/>
    <property type="match status" value="1"/>
</dbReference>
<dbReference type="CDD" id="cd04317">
    <property type="entry name" value="EcAspRS_like_N"/>
    <property type="match status" value="1"/>
</dbReference>
<dbReference type="Gene3D" id="3.30.930.10">
    <property type="entry name" value="Bira Bifunctional Protein, Domain 2"/>
    <property type="match status" value="1"/>
</dbReference>
<dbReference type="Gene3D" id="3.30.1360.30">
    <property type="entry name" value="GAD-like domain"/>
    <property type="match status" value="1"/>
</dbReference>
<dbReference type="Gene3D" id="2.40.50.140">
    <property type="entry name" value="Nucleic acid-binding proteins"/>
    <property type="match status" value="1"/>
</dbReference>
<dbReference type="HAMAP" id="MF_00044">
    <property type="entry name" value="Asp_tRNA_synth_type1"/>
    <property type="match status" value="1"/>
</dbReference>
<dbReference type="InterPro" id="IPR004364">
    <property type="entry name" value="Aa-tRNA-synt_II"/>
</dbReference>
<dbReference type="InterPro" id="IPR006195">
    <property type="entry name" value="aa-tRNA-synth_II"/>
</dbReference>
<dbReference type="InterPro" id="IPR045864">
    <property type="entry name" value="aa-tRNA-synth_II/BPL/LPL"/>
</dbReference>
<dbReference type="InterPro" id="IPR004524">
    <property type="entry name" value="Asp-tRNA-ligase_1"/>
</dbReference>
<dbReference type="InterPro" id="IPR047089">
    <property type="entry name" value="Asp-tRNA-ligase_1_N"/>
</dbReference>
<dbReference type="InterPro" id="IPR002312">
    <property type="entry name" value="Asp/Asn-tRNA-synth_IIb"/>
</dbReference>
<dbReference type="InterPro" id="IPR047090">
    <property type="entry name" value="AspRS_core"/>
</dbReference>
<dbReference type="InterPro" id="IPR004115">
    <property type="entry name" value="GAD-like_sf"/>
</dbReference>
<dbReference type="InterPro" id="IPR012340">
    <property type="entry name" value="NA-bd_OB-fold"/>
</dbReference>
<dbReference type="InterPro" id="IPR004365">
    <property type="entry name" value="NA-bd_OB_tRNA"/>
</dbReference>
<dbReference type="NCBIfam" id="TIGR00459">
    <property type="entry name" value="aspS_bact"/>
    <property type="match status" value="1"/>
</dbReference>
<dbReference type="NCBIfam" id="NF001750">
    <property type="entry name" value="PRK00476.1"/>
    <property type="match status" value="1"/>
</dbReference>
<dbReference type="PANTHER" id="PTHR22594:SF5">
    <property type="entry name" value="ASPARTATE--TRNA LIGASE, MITOCHONDRIAL"/>
    <property type="match status" value="1"/>
</dbReference>
<dbReference type="PANTHER" id="PTHR22594">
    <property type="entry name" value="ASPARTYL/LYSYL-TRNA SYNTHETASE"/>
    <property type="match status" value="1"/>
</dbReference>
<dbReference type="Pfam" id="PF00152">
    <property type="entry name" value="tRNA-synt_2"/>
    <property type="match status" value="1"/>
</dbReference>
<dbReference type="Pfam" id="PF01336">
    <property type="entry name" value="tRNA_anti-codon"/>
    <property type="match status" value="1"/>
</dbReference>
<dbReference type="PRINTS" id="PR01042">
    <property type="entry name" value="TRNASYNTHASP"/>
</dbReference>
<dbReference type="SUPFAM" id="SSF55681">
    <property type="entry name" value="Class II aaRS and biotin synthetases"/>
    <property type="match status" value="1"/>
</dbReference>
<dbReference type="SUPFAM" id="SSF50249">
    <property type="entry name" value="Nucleic acid-binding proteins"/>
    <property type="match status" value="1"/>
</dbReference>
<dbReference type="PROSITE" id="PS50862">
    <property type="entry name" value="AA_TRNA_LIGASE_II"/>
    <property type="match status" value="1"/>
</dbReference>
<gene>
    <name evidence="1" type="primary">aspS</name>
    <name type="ordered locus">ACP_2346</name>
</gene>